<feature type="chain" id="PRO_0000131078" description="Large ribosomal subunit protein uL6c">
    <location>
        <begin position="1"/>
        <end position="179"/>
    </location>
</feature>
<gene>
    <name type="primary">rpl6</name>
</gene>
<name>RK6_GUITH</name>
<reference key="1">
    <citation type="journal article" date="1997" name="Biochem. Mol. Biol. Int.">
        <title>The large ribosomal protein gene cluster of a cryptomonad plastid: gene organization, sequence and evolutionary implications.</title>
        <authorList>
            <person name="Wang S.L."/>
            <person name="Liu X.-Q."/>
            <person name="Douglas S.E."/>
        </authorList>
    </citation>
    <scope>NUCLEOTIDE SEQUENCE [GENOMIC DNA]</scope>
</reference>
<reference key="2">
    <citation type="journal article" date="1999" name="J. Mol. Evol.">
        <title>The plastid genome of the cryptophyte alga, Guillardia theta: complete sequence and conserved synteny groups confirm its common ancestry with red algae.</title>
        <authorList>
            <person name="Douglas S.E."/>
            <person name="Penny S.L."/>
        </authorList>
    </citation>
    <scope>NUCLEOTIDE SEQUENCE [LARGE SCALE GENOMIC DNA]</scope>
</reference>
<geneLocation type="chloroplast"/>
<dbReference type="EMBL" id="AF041468">
    <property type="protein sequence ID" value="AAC35717.1"/>
    <property type="molecule type" value="Genomic_DNA"/>
</dbReference>
<dbReference type="RefSeq" id="NP_050783.1">
    <property type="nucleotide sequence ID" value="NC_000926.1"/>
</dbReference>
<dbReference type="SMR" id="O46908"/>
<dbReference type="GeneID" id="857091"/>
<dbReference type="HOGENOM" id="CLU_065464_1_2_1"/>
<dbReference type="OMA" id="RERHGLC"/>
<dbReference type="GO" id="GO:0009507">
    <property type="term" value="C:chloroplast"/>
    <property type="evidence" value="ECO:0007669"/>
    <property type="project" value="UniProtKB-SubCell"/>
</dbReference>
<dbReference type="GO" id="GO:0022625">
    <property type="term" value="C:cytosolic large ribosomal subunit"/>
    <property type="evidence" value="ECO:0007669"/>
    <property type="project" value="TreeGrafter"/>
</dbReference>
<dbReference type="GO" id="GO:0019843">
    <property type="term" value="F:rRNA binding"/>
    <property type="evidence" value="ECO:0007669"/>
    <property type="project" value="UniProtKB-UniRule"/>
</dbReference>
<dbReference type="GO" id="GO:0003735">
    <property type="term" value="F:structural constituent of ribosome"/>
    <property type="evidence" value="ECO:0007669"/>
    <property type="project" value="InterPro"/>
</dbReference>
<dbReference type="GO" id="GO:0002181">
    <property type="term" value="P:cytoplasmic translation"/>
    <property type="evidence" value="ECO:0007669"/>
    <property type="project" value="TreeGrafter"/>
</dbReference>
<dbReference type="FunFam" id="3.90.930.12:FF:000001">
    <property type="entry name" value="50S ribosomal protein L6"/>
    <property type="match status" value="1"/>
</dbReference>
<dbReference type="Gene3D" id="3.90.930.12">
    <property type="entry name" value="Ribosomal protein L6, alpha-beta domain"/>
    <property type="match status" value="2"/>
</dbReference>
<dbReference type="HAMAP" id="MF_01365_B">
    <property type="entry name" value="Ribosomal_uL6_B"/>
    <property type="match status" value="1"/>
</dbReference>
<dbReference type="InterPro" id="IPR000702">
    <property type="entry name" value="Ribosomal_uL6-like"/>
</dbReference>
<dbReference type="InterPro" id="IPR036789">
    <property type="entry name" value="Ribosomal_uL6-like_a/b-dom_sf"/>
</dbReference>
<dbReference type="InterPro" id="IPR020040">
    <property type="entry name" value="Ribosomal_uL6_a/b-dom"/>
</dbReference>
<dbReference type="InterPro" id="IPR019906">
    <property type="entry name" value="Ribosomal_uL6_bac-type"/>
</dbReference>
<dbReference type="InterPro" id="IPR002358">
    <property type="entry name" value="Ribosomal_uL6_CS"/>
</dbReference>
<dbReference type="NCBIfam" id="TIGR03654">
    <property type="entry name" value="L6_bact"/>
    <property type="match status" value="1"/>
</dbReference>
<dbReference type="PANTHER" id="PTHR11655">
    <property type="entry name" value="60S/50S RIBOSOMAL PROTEIN L6/L9"/>
    <property type="match status" value="1"/>
</dbReference>
<dbReference type="PANTHER" id="PTHR11655:SF14">
    <property type="entry name" value="LARGE RIBOSOMAL SUBUNIT PROTEIN UL6M"/>
    <property type="match status" value="1"/>
</dbReference>
<dbReference type="Pfam" id="PF00347">
    <property type="entry name" value="Ribosomal_L6"/>
    <property type="match status" value="2"/>
</dbReference>
<dbReference type="PIRSF" id="PIRSF002162">
    <property type="entry name" value="Ribosomal_L6"/>
    <property type="match status" value="1"/>
</dbReference>
<dbReference type="PRINTS" id="PR00059">
    <property type="entry name" value="RIBOSOMALL6"/>
</dbReference>
<dbReference type="SUPFAM" id="SSF56053">
    <property type="entry name" value="Ribosomal protein L6"/>
    <property type="match status" value="2"/>
</dbReference>
<dbReference type="PROSITE" id="PS00525">
    <property type="entry name" value="RIBOSOMAL_L6_1"/>
    <property type="match status" value="1"/>
</dbReference>
<comment type="function">
    <text evidence="1">Binds 23S rRNA.</text>
</comment>
<comment type="subunit">
    <text evidence="1">Part of the 50S ribosomal subunit.</text>
</comment>
<comment type="subcellular location">
    <subcellularLocation>
        <location>Plastid</location>
        <location>Chloroplast</location>
    </subcellularLocation>
</comment>
<comment type="similarity">
    <text evidence="2">Belongs to the universal ribosomal protein uL6 family.</text>
</comment>
<proteinExistence type="inferred from homology"/>
<evidence type="ECO:0000250" key="1"/>
<evidence type="ECO:0000305" key="2"/>
<sequence length="179" mass="19527">MSRIGKLPVKFSEKVTMKIDQDNIIVKGPKGELALGLSKNINITIENNTLFVKPVTKEPQVLKLFGTYRAIINNMVVGVTKGFEKRLELQGVGYRAQLQGKDLSLSVGYSHPVVIKAPTGINIAVENNTIVIISGISKELVGQIASNIRSIKPPEPYKGKGIRYVGEFVRKKAGKAGKK</sequence>
<accession>O46908</accession>
<organism>
    <name type="scientific">Guillardia theta</name>
    <name type="common">Cryptophyte</name>
    <name type="synonym">Cryptomonas phi</name>
    <dbReference type="NCBI Taxonomy" id="55529"/>
    <lineage>
        <taxon>Eukaryota</taxon>
        <taxon>Cryptophyceae</taxon>
        <taxon>Pyrenomonadales</taxon>
        <taxon>Geminigeraceae</taxon>
        <taxon>Guillardia</taxon>
    </lineage>
</organism>
<keyword id="KW-0150">Chloroplast</keyword>
<keyword id="KW-0934">Plastid</keyword>
<keyword id="KW-0687">Ribonucleoprotein</keyword>
<keyword id="KW-0689">Ribosomal protein</keyword>
<keyword id="KW-0694">RNA-binding</keyword>
<keyword id="KW-0699">rRNA-binding</keyword>
<protein>
    <recommendedName>
        <fullName evidence="2">Large ribosomal subunit protein uL6c</fullName>
    </recommendedName>
    <alternativeName>
        <fullName>50S ribosomal protein L6, chloroplastic</fullName>
    </alternativeName>
</protein>